<reference key="1">
    <citation type="journal article" date="2009" name="PLoS ONE">
        <title>Salmonella paratyphi C: genetic divergence from Salmonella choleraesuis and pathogenic convergence with Salmonella typhi.</title>
        <authorList>
            <person name="Liu W.-Q."/>
            <person name="Feng Y."/>
            <person name="Wang Y."/>
            <person name="Zou Q.-H."/>
            <person name="Chen F."/>
            <person name="Guo J.-T."/>
            <person name="Peng Y.-H."/>
            <person name="Jin Y."/>
            <person name="Li Y.-G."/>
            <person name="Hu S.-N."/>
            <person name="Johnston R.N."/>
            <person name="Liu G.-R."/>
            <person name="Liu S.-L."/>
        </authorList>
    </citation>
    <scope>NUCLEOTIDE SEQUENCE [LARGE SCALE GENOMIC DNA]</scope>
    <source>
        <strain>RKS4594</strain>
    </source>
</reference>
<dbReference type="EMBL" id="CP000857">
    <property type="protein sequence ID" value="ACN46687.1"/>
    <property type="molecule type" value="Genomic_DNA"/>
</dbReference>
<dbReference type="RefSeq" id="WP_000092160.1">
    <property type="nucleotide sequence ID" value="NC_012125.1"/>
</dbReference>
<dbReference type="SMR" id="C0Q842"/>
<dbReference type="KEGG" id="sei:SPC_2583"/>
<dbReference type="HOGENOM" id="CLU_001265_60_2_6"/>
<dbReference type="Proteomes" id="UP000001599">
    <property type="component" value="Chromosome"/>
</dbReference>
<dbReference type="GO" id="GO:0005886">
    <property type="term" value="C:plasma membrane"/>
    <property type="evidence" value="ECO:0007669"/>
    <property type="project" value="UniProtKB-SubCell"/>
</dbReference>
<dbReference type="GO" id="GO:0022857">
    <property type="term" value="F:transmembrane transporter activity"/>
    <property type="evidence" value="ECO:0007669"/>
    <property type="project" value="UniProtKB-UniRule"/>
</dbReference>
<dbReference type="CDD" id="cd17329">
    <property type="entry name" value="MFS_MdtH_MDR_like"/>
    <property type="match status" value="1"/>
</dbReference>
<dbReference type="FunFam" id="1.20.1250.20:FF:000039">
    <property type="entry name" value="Multidrug resistance protein MdtH"/>
    <property type="match status" value="1"/>
</dbReference>
<dbReference type="Gene3D" id="1.20.1250.20">
    <property type="entry name" value="MFS general substrate transporter like domains"/>
    <property type="match status" value="1"/>
</dbReference>
<dbReference type="HAMAP" id="MF_01529">
    <property type="entry name" value="MFS_MdtH"/>
    <property type="match status" value="1"/>
</dbReference>
<dbReference type="InterPro" id="IPR011701">
    <property type="entry name" value="MFS"/>
</dbReference>
<dbReference type="InterPro" id="IPR020846">
    <property type="entry name" value="MFS_dom"/>
</dbReference>
<dbReference type="InterPro" id="IPR036259">
    <property type="entry name" value="MFS_trans_sf"/>
</dbReference>
<dbReference type="InterPro" id="IPR050171">
    <property type="entry name" value="MFS_Transporters"/>
</dbReference>
<dbReference type="InterPro" id="IPR022855">
    <property type="entry name" value="Multidrug-R_MdtH"/>
</dbReference>
<dbReference type="NCBIfam" id="NF008650">
    <property type="entry name" value="PRK11646.1"/>
    <property type="match status" value="1"/>
</dbReference>
<dbReference type="PANTHER" id="PTHR23517:SF2">
    <property type="entry name" value="MULTIDRUG RESISTANCE PROTEIN MDTH"/>
    <property type="match status" value="1"/>
</dbReference>
<dbReference type="PANTHER" id="PTHR23517">
    <property type="entry name" value="RESISTANCE PROTEIN MDTM, PUTATIVE-RELATED-RELATED"/>
    <property type="match status" value="1"/>
</dbReference>
<dbReference type="Pfam" id="PF07690">
    <property type="entry name" value="MFS_1"/>
    <property type="match status" value="1"/>
</dbReference>
<dbReference type="SUPFAM" id="SSF103473">
    <property type="entry name" value="MFS general substrate transporter"/>
    <property type="match status" value="1"/>
</dbReference>
<dbReference type="PROSITE" id="PS50850">
    <property type="entry name" value="MFS"/>
    <property type="match status" value="1"/>
</dbReference>
<keyword id="KW-0997">Cell inner membrane</keyword>
<keyword id="KW-1003">Cell membrane</keyword>
<keyword id="KW-0472">Membrane</keyword>
<keyword id="KW-0812">Transmembrane</keyword>
<keyword id="KW-1133">Transmembrane helix</keyword>
<keyword id="KW-0813">Transport</keyword>
<gene>
    <name evidence="1" type="primary">mdtH</name>
    <name type="ordered locus">SPC_2583</name>
</gene>
<evidence type="ECO:0000255" key="1">
    <source>
        <dbReference type="HAMAP-Rule" id="MF_01529"/>
    </source>
</evidence>
<name>MDTH_SALPC</name>
<accession>C0Q842</accession>
<comment type="subcellular location">
    <subcellularLocation>
        <location evidence="1">Cell inner membrane</location>
        <topology evidence="1">Multi-pass membrane protein</topology>
    </subcellularLocation>
</comment>
<comment type="similarity">
    <text evidence="1">Belongs to the major facilitator superfamily. DHA1 family. MdtH (TC 2.A.1.2.21) subfamily.</text>
</comment>
<sequence>MSRVSQARNLGKYFLLIDNMLVVLGFFVVFPLISIRFIDQMGWAAVMVGIALGLRQFIQQGLGIFGGAIADRFGAKPMIVTGMLMRAAGFATMGIAHEPWLLWFSCFLSGLGGTLFDPPRSALVVKLIRPEQRGRFFSLLMMQDSAGAVIGALLGSWLLQYDFRLVCATGAILFILCALFNAWLLPAWKLSTVRTPVREGMRRVMSDKRFVTYVLTLAGYYMLAVQVMLMLPIMVNDIAGSPAAVKWMYAIEACLSLTLLYPIARWSEKRFRLEHRLMAGLLVMSLSMIPIGMVGNLQQLFTLICAFYIGSVIAEPARETLSASLADARARGSYMGFSRLGLAIGGAIGYIGGGWLFDMGKALTQPELPWMMLGIIGFITFLALGWQFSHKRTPRRMLEPGA</sequence>
<proteinExistence type="inferred from homology"/>
<protein>
    <recommendedName>
        <fullName evidence="1">Multidrug resistance protein MdtH</fullName>
    </recommendedName>
</protein>
<organism>
    <name type="scientific">Salmonella paratyphi C (strain RKS4594)</name>
    <dbReference type="NCBI Taxonomy" id="476213"/>
    <lineage>
        <taxon>Bacteria</taxon>
        <taxon>Pseudomonadati</taxon>
        <taxon>Pseudomonadota</taxon>
        <taxon>Gammaproteobacteria</taxon>
        <taxon>Enterobacterales</taxon>
        <taxon>Enterobacteriaceae</taxon>
        <taxon>Salmonella</taxon>
    </lineage>
</organism>
<feature type="chain" id="PRO_1000185167" description="Multidrug resistance protein MdtH">
    <location>
        <begin position="1"/>
        <end position="402"/>
    </location>
</feature>
<feature type="topological domain" description="Cytoplasmic" evidence="1">
    <location>
        <begin position="1"/>
        <end position="12"/>
    </location>
</feature>
<feature type="transmembrane region" description="Helical" evidence="1">
    <location>
        <begin position="13"/>
        <end position="33"/>
    </location>
</feature>
<feature type="topological domain" description="Periplasmic" evidence="1">
    <location>
        <begin position="34"/>
        <end position="98"/>
    </location>
</feature>
<feature type="transmembrane region" description="Helical" evidence="1">
    <location>
        <begin position="99"/>
        <end position="116"/>
    </location>
</feature>
<feature type="topological domain" description="Cytoplasmic" evidence="1">
    <location>
        <begin position="117"/>
        <end position="138"/>
    </location>
</feature>
<feature type="transmembrane region" description="Helical" evidence="1">
    <location>
        <begin position="139"/>
        <end position="159"/>
    </location>
</feature>
<feature type="topological domain" description="Periplasmic" evidence="1">
    <location>
        <begin position="160"/>
        <end position="164"/>
    </location>
</feature>
<feature type="transmembrane region" description="Helical" evidence="1">
    <location>
        <begin position="165"/>
        <end position="185"/>
    </location>
</feature>
<feature type="topological domain" description="Cytoplasmic" evidence="1">
    <location>
        <begin position="186"/>
        <end position="213"/>
    </location>
</feature>
<feature type="transmembrane region" description="Helical" evidence="1">
    <location>
        <begin position="214"/>
        <end position="234"/>
    </location>
</feature>
<feature type="topological domain" description="Periplasmic" evidence="1">
    <location>
        <begin position="235"/>
        <end position="243"/>
    </location>
</feature>
<feature type="transmembrane region" description="Helical" evidence="1">
    <location>
        <begin position="244"/>
        <end position="264"/>
    </location>
</feature>
<feature type="topological domain" description="Cytoplasmic" evidence="1">
    <location>
        <begin position="265"/>
        <end position="276"/>
    </location>
</feature>
<feature type="transmembrane region" description="Helical" evidence="1">
    <location>
        <begin position="277"/>
        <end position="297"/>
    </location>
</feature>
<feature type="topological domain" description="Periplasmic" evidence="1">
    <location>
        <begin position="298"/>
        <end position="299"/>
    </location>
</feature>
<feature type="transmembrane region" description="Helical" evidence="1">
    <location>
        <begin position="300"/>
        <end position="320"/>
    </location>
</feature>
<feature type="topological domain" description="Cytoplasmic" evidence="1">
    <location>
        <begin position="321"/>
        <end position="339"/>
    </location>
</feature>
<feature type="transmembrane region" description="Helical" evidence="1">
    <location>
        <begin position="340"/>
        <end position="360"/>
    </location>
</feature>
<feature type="topological domain" description="Periplasmic" evidence="1">
    <location>
        <begin position="361"/>
        <end position="367"/>
    </location>
</feature>
<feature type="transmembrane region" description="Helical" evidence="1">
    <location>
        <begin position="368"/>
        <end position="388"/>
    </location>
</feature>
<feature type="topological domain" description="Cytoplasmic" evidence="1">
    <location>
        <begin position="389"/>
        <end position="402"/>
    </location>
</feature>